<accession>Q08121</accession>
<dbReference type="EMBL" id="L13247">
    <property type="protein sequence ID" value="AAA28293.1"/>
    <property type="molecule type" value="mRNA"/>
</dbReference>
<dbReference type="EMBL" id="X70221">
    <property type="protein sequence ID" value="CAA49754.1"/>
    <property type="molecule type" value="mRNA"/>
</dbReference>
<dbReference type="PIR" id="S28860">
    <property type="entry name" value="S28860"/>
</dbReference>
<dbReference type="SMR" id="Q08121"/>
<dbReference type="IntAct" id="Q08121">
    <property type="interactions" value="1"/>
</dbReference>
<dbReference type="MINT" id="Q08121"/>
<dbReference type="GO" id="GO:0005509">
    <property type="term" value="F:calcium ion binding"/>
    <property type="evidence" value="ECO:0007669"/>
    <property type="project" value="InterPro"/>
</dbReference>
<dbReference type="GO" id="GO:0008218">
    <property type="term" value="P:bioluminescence"/>
    <property type="evidence" value="ECO:0007669"/>
    <property type="project" value="UniProtKB-KW"/>
</dbReference>
<dbReference type="CDD" id="cd00051">
    <property type="entry name" value="EFh"/>
    <property type="match status" value="1"/>
</dbReference>
<dbReference type="Gene3D" id="1.10.238.10">
    <property type="entry name" value="EF-hand"/>
    <property type="match status" value="1"/>
</dbReference>
<dbReference type="InterPro" id="IPR050145">
    <property type="entry name" value="Centrin_CML-like"/>
</dbReference>
<dbReference type="InterPro" id="IPR011992">
    <property type="entry name" value="EF-hand-dom_pair"/>
</dbReference>
<dbReference type="InterPro" id="IPR018247">
    <property type="entry name" value="EF_Hand_1_Ca_BS"/>
</dbReference>
<dbReference type="InterPro" id="IPR002048">
    <property type="entry name" value="EF_hand_dom"/>
</dbReference>
<dbReference type="PANTHER" id="PTHR23050">
    <property type="entry name" value="CALCIUM BINDING PROTEIN"/>
    <property type="match status" value="1"/>
</dbReference>
<dbReference type="Pfam" id="PF13202">
    <property type="entry name" value="EF-hand_5"/>
    <property type="match status" value="1"/>
</dbReference>
<dbReference type="Pfam" id="PF13499">
    <property type="entry name" value="EF-hand_7"/>
    <property type="match status" value="1"/>
</dbReference>
<dbReference type="SMART" id="SM00054">
    <property type="entry name" value="EFh"/>
    <property type="match status" value="3"/>
</dbReference>
<dbReference type="SUPFAM" id="SSF47473">
    <property type="entry name" value="EF-hand"/>
    <property type="match status" value="1"/>
</dbReference>
<dbReference type="PROSITE" id="PS00018">
    <property type="entry name" value="EF_HAND_1"/>
    <property type="match status" value="3"/>
</dbReference>
<dbReference type="PROSITE" id="PS50222">
    <property type="entry name" value="EF_HAND_2"/>
    <property type="match status" value="3"/>
</dbReference>
<comment type="function">
    <text>Ca(2+)-dependent bioluminescence photoprotein. Displays an emission peak at 470 nm (blue light). Trace amounts of calcium ion trigger the intramolecular oxidation of the chromophore, coelenterazine into coelenteramide and CO(2) with the concomitant emission of light.</text>
</comment>
<comment type="similarity">
    <text evidence="4">Belongs to the aequorin family.</text>
</comment>
<organism>
    <name type="scientific">Clytia gregaria</name>
    <name type="common">Gregarious jellyfish</name>
    <name type="synonym">Phialidium gregarium</name>
    <dbReference type="NCBI Taxonomy" id="27801"/>
    <lineage>
        <taxon>Eukaryota</taxon>
        <taxon>Metazoa</taxon>
        <taxon>Cnidaria</taxon>
        <taxon>Hydrozoa</taxon>
        <taxon>Hydroidolina</taxon>
        <taxon>Leptothecata</taxon>
        <taxon>Obeliida</taxon>
        <taxon>Clytiidae</taxon>
        <taxon>Clytia</taxon>
    </lineage>
</organism>
<proteinExistence type="evidence at transcript level"/>
<sequence length="198" mass="22541">MADTASKYAVKLRPNFDNPKWVNRHKFMFNFLDINGDGKITLDEIVSKASDDICAKLGATPEQTKRHQDAVEAFFKKIGMDYGKEVEFPAFVDGWKELANYDLKLWSQNKKSLIRDWGEAVFDIFDKDGSGSISLDEWKAYGRISGICSSDEDAEKTFKHCDLDNSGKLDVDEMTRQHLGFWYTLDPNADGLYGNFVP</sequence>
<reference key="1">
    <citation type="journal article" date="1993" name="FEBS Lett.">
        <title>Cloning and sequence analysis of cDNA for the Ca(2+)-activated photoprotein, clytin.</title>
        <authorList>
            <person name="Inouye S."/>
            <person name="Tsuji F.I."/>
        </authorList>
    </citation>
    <scope>NUCLEOTIDE SEQUENCE [MRNA]</scope>
</reference>
<protein>
    <recommendedName>
        <fullName>Clytin</fullName>
    </recommendedName>
    <alternativeName>
        <fullName>Phialidin</fullName>
    </alternativeName>
</protein>
<feature type="propeptide" id="PRO_0000004130" evidence="2">
    <location>
        <begin position="1"/>
        <end position="9"/>
    </location>
</feature>
<feature type="chain" id="PRO_0000004131" description="Clytin">
    <location>
        <begin position="10"/>
        <end position="198"/>
    </location>
</feature>
<feature type="domain" description="EF-hand 1" evidence="3">
    <location>
        <begin position="20"/>
        <end position="55"/>
    </location>
</feature>
<feature type="domain" description="EF-hand 2" evidence="1">
    <location>
        <begin position="60"/>
        <end position="95"/>
    </location>
</feature>
<feature type="domain" description="EF-hand 3" evidence="3">
    <location>
        <begin position="119"/>
        <end position="148"/>
    </location>
</feature>
<feature type="domain" description="EF-hand 4" evidence="3">
    <location>
        <begin position="149"/>
        <end position="184"/>
    </location>
</feature>
<feature type="binding site" evidence="3">
    <location>
        <position position="33"/>
    </location>
    <ligand>
        <name>Ca(2+)</name>
        <dbReference type="ChEBI" id="CHEBI:29108"/>
        <label>1</label>
    </ligand>
</feature>
<feature type="binding site" evidence="3">
    <location>
        <position position="35"/>
    </location>
    <ligand>
        <name>Ca(2+)</name>
        <dbReference type="ChEBI" id="CHEBI:29108"/>
        <label>1</label>
    </ligand>
</feature>
<feature type="binding site" evidence="3">
    <location>
        <position position="37"/>
    </location>
    <ligand>
        <name>Ca(2+)</name>
        <dbReference type="ChEBI" id="CHEBI:29108"/>
        <label>1</label>
    </ligand>
</feature>
<feature type="binding site" evidence="3">
    <location>
        <position position="39"/>
    </location>
    <ligand>
        <name>Ca(2+)</name>
        <dbReference type="ChEBI" id="CHEBI:29108"/>
        <label>1</label>
    </ligand>
</feature>
<feature type="binding site" evidence="3">
    <location>
        <position position="44"/>
    </location>
    <ligand>
        <name>Ca(2+)</name>
        <dbReference type="ChEBI" id="CHEBI:29108"/>
        <label>1</label>
    </ligand>
</feature>
<feature type="binding site" evidence="3">
    <location>
        <position position="126"/>
    </location>
    <ligand>
        <name>Ca(2+)</name>
        <dbReference type="ChEBI" id="CHEBI:29108"/>
        <label>2</label>
    </ligand>
</feature>
<feature type="binding site" evidence="3">
    <location>
        <position position="128"/>
    </location>
    <ligand>
        <name>Ca(2+)</name>
        <dbReference type="ChEBI" id="CHEBI:29108"/>
        <label>2</label>
    </ligand>
</feature>
<feature type="binding site" evidence="3">
    <location>
        <position position="130"/>
    </location>
    <ligand>
        <name>Ca(2+)</name>
        <dbReference type="ChEBI" id="CHEBI:29108"/>
        <label>2</label>
    </ligand>
</feature>
<feature type="binding site" evidence="3">
    <location>
        <position position="132"/>
    </location>
    <ligand>
        <name>Ca(2+)</name>
        <dbReference type="ChEBI" id="CHEBI:29108"/>
        <label>2</label>
    </ligand>
</feature>
<feature type="binding site" evidence="3">
    <location>
        <position position="137"/>
    </location>
    <ligand>
        <name>Ca(2+)</name>
        <dbReference type="ChEBI" id="CHEBI:29108"/>
        <label>2</label>
    </ligand>
</feature>
<feature type="binding site" evidence="3">
    <location>
        <position position="162"/>
    </location>
    <ligand>
        <name>Ca(2+)</name>
        <dbReference type="ChEBI" id="CHEBI:29108"/>
        <label>3</label>
    </ligand>
</feature>
<feature type="binding site" evidence="3">
    <location>
        <position position="164"/>
    </location>
    <ligand>
        <name>Ca(2+)</name>
        <dbReference type="ChEBI" id="CHEBI:29108"/>
        <label>3</label>
    </ligand>
</feature>
<feature type="binding site" evidence="3">
    <location>
        <position position="166"/>
    </location>
    <ligand>
        <name>Ca(2+)</name>
        <dbReference type="ChEBI" id="CHEBI:29108"/>
        <label>3</label>
    </ligand>
</feature>
<feature type="binding site" evidence="3">
    <location>
        <position position="168"/>
    </location>
    <ligand>
        <name>Ca(2+)</name>
        <dbReference type="ChEBI" id="CHEBI:29108"/>
        <label>3</label>
    </ligand>
</feature>
<feature type="binding site" evidence="3">
    <location>
        <position position="173"/>
    </location>
    <ligand>
        <name>Ca(2+)</name>
        <dbReference type="ChEBI" id="CHEBI:29108"/>
        <label>3</label>
    </ligand>
</feature>
<name>CLYT_CLYGR</name>
<evidence type="ECO:0000250" key="1">
    <source>
        <dbReference type="UniProtKB" id="P02592"/>
    </source>
</evidence>
<evidence type="ECO:0000255" key="2"/>
<evidence type="ECO:0000255" key="3">
    <source>
        <dbReference type="PROSITE-ProRule" id="PRU00448"/>
    </source>
</evidence>
<evidence type="ECO:0000305" key="4"/>
<keyword id="KW-0106">Calcium</keyword>
<keyword id="KW-0455">Luminescence</keyword>
<keyword id="KW-0479">Metal-binding</keyword>
<keyword id="KW-0599">Photoprotein</keyword>
<keyword id="KW-0677">Repeat</keyword>